<protein>
    <recommendedName>
        <fullName evidence="1">Sulfur carrier protein TusA</fullName>
    </recommendedName>
</protein>
<sequence>MTINFDNATLILEAEGLRCPEPVMMVRKTIRQMADGDTLLIKADDPSTTRDIPSFCRFMDHELIAEDTETLPFRFLIRKGLSA</sequence>
<name>TUSA_ALISL</name>
<proteinExistence type="inferred from homology"/>
<accession>B6EGT6</accession>
<evidence type="ECO:0000255" key="1">
    <source>
        <dbReference type="HAMAP-Rule" id="MF_00413"/>
    </source>
</evidence>
<dbReference type="EMBL" id="FM178379">
    <property type="protein sequence ID" value="CAQ80652.1"/>
    <property type="molecule type" value="Genomic_DNA"/>
</dbReference>
<dbReference type="RefSeq" id="WP_012551370.1">
    <property type="nucleotide sequence ID" value="NC_011312.1"/>
</dbReference>
<dbReference type="SMR" id="B6EGT6"/>
<dbReference type="KEGG" id="vsa:VSAL_I2968"/>
<dbReference type="eggNOG" id="COG0425">
    <property type="taxonomic scope" value="Bacteria"/>
</dbReference>
<dbReference type="HOGENOM" id="CLU_165255_5_0_6"/>
<dbReference type="Proteomes" id="UP000001730">
    <property type="component" value="Chromosome 1"/>
</dbReference>
<dbReference type="GO" id="GO:0005737">
    <property type="term" value="C:cytoplasm"/>
    <property type="evidence" value="ECO:0007669"/>
    <property type="project" value="UniProtKB-SubCell"/>
</dbReference>
<dbReference type="GO" id="GO:0097163">
    <property type="term" value="F:sulfur carrier activity"/>
    <property type="evidence" value="ECO:0007669"/>
    <property type="project" value="UniProtKB-UniRule"/>
</dbReference>
<dbReference type="GO" id="GO:0002143">
    <property type="term" value="P:tRNA wobble position uridine thiolation"/>
    <property type="evidence" value="ECO:0007669"/>
    <property type="project" value="InterPro"/>
</dbReference>
<dbReference type="CDD" id="cd03423">
    <property type="entry name" value="SirA"/>
    <property type="match status" value="1"/>
</dbReference>
<dbReference type="Gene3D" id="3.30.110.40">
    <property type="entry name" value="TusA-like domain"/>
    <property type="match status" value="1"/>
</dbReference>
<dbReference type="HAMAP" id="MF_00413">
    <property type="entry name" value="Thiourid_synth_A"/>
    <property type="match status" value="1"/>
</dbReference>
<dbReference type="InterPro" id="IPR022931">
    <property type="entry name" value="Sulphur_carrier_TusA"/>
</dbReference>
<dbReference type="InterPro" id="IPR001455">
    <property type="entry name" value="TusA-like"/>
</dbReference>
<dbReference type="InterPro" id="IPR036868">
    <property type="entry name" value="TusA-like_sf"/>
</dbReference>
<dbReference type="NCBIfam" id="NF001423">
    <property type="entry name" value="PRK00299.1"/>
    <property type="match status" value="1"/>
</dbReference>
<dbReference type="PANTHER" id="PTHR33279:SF2">
    <property type="entry name" value="SULFUR CARRIER PROTEIN TUSA"/>
    <property type="match status" value="1"/>
</dbReference>
<dbReference type="PANTHER" id="PTHR33279">
    <property type="entry name" value="SULFUR CARRIER PROTEIN YEDF-RELATED"/>
    <property type="match status" value="1"/>
</dbReference>
<dbReference type="Pfam" id="PF01206">
    <property type="entry name" value="TusA"/>
    <property type="match status" value="1"/>
</dbReference>
<dbReference type="SUPFAM" id="SSF64307">
    <property type="entry name" value="SirA-like"/>
    <property type="match status" value="1"/>
</dbReference>
<dbReference type="PROSITE" id="PS01148">
    <property type="entry name" value="UPF0033"/>
    <property type="match status" value="1"/>
</dbReference>
<comment type="function">
    <text evidence="1">Sulfur carrier protein which probably makes part of a sulfur-relay system.</text>
</comment>
<comment type="subcellular location">
    <subcellularLocation>
        <location evidence="1">Cytoplasm</location>
    </subcellularLocation>
</comment>
<comment type="similarity">
    <text evidence="1">Belongs to the sulfur carrier protein TusA family.</text>
</comment>
<organism>
    <name type="scientific">Aliivibrio salmonicida (strain LFI1238)</name>
    <name type="common">Vibrio salmonicida (strain LFI1238)</name>
    <dbReference type="NCBI Taxonomy" id="316275"/>
    <lineage>
        <taxon>Bacteria</taxon>
        <taxon>Pseudomonadati</taxon>
        <taxon>Pseudomonadota</taxon>
        <taxon>Gammaproteobacteria</taxon>
        <taxon>Vibrionales</taxon>
        <taxon>Vibrionaceae</taxon>
        <taxon>Aliivibrio</taxon>
    </lineage>
</organism>
<reference key="1">
    <citation type="journal article" date="2008" name="BMC Genomics">
        <title>The genome sequence of the fish pathogen Aliivibrio salmonicida strain LFI1238 shows extensive evidence of gene decay.</title>
        <authorList>
            <person name="Hjerde E."/>
            <person name="Lorentzen M.S."/>
            <person name="Holden M.T."/>
            <person name="Seeger K."/>
            <person name="Paulsen S."/>
            <person name="Bason N."/>
            <person name="Churcher C."/>
            <person name="Harris D."/>
            <person name="Norbertczak H."/>
            <person name="Quail M.A."/>
            <person name="Sanders S."/>
            <person name="Thurston S."/>
            <person name="Parkhill J."/>
            <person name="Willassen N.P."/>
            <person name="Thomson N.R."/>
        </authorList>
    </citation>
    <scope>NUCLEOTIDE SEQUENCE [LARGE SCALE GENOMIC DNA]</scope>
    <source>
        <strain>LFI1238</strain>
    </source>
</reference>
<feature type="chain" id="PRO_1000199907" description="Sulfur carrier protein TusA">
    <location>
        <begin position="1"/>
        <end position="83"/>
    </location>
</feature>
<feature type="active site" description="Cysteine persulfide intermediate" evidence="1">
    <location>
        <position position="19"/>
    </location>
</feature>
<gene>
    <name evidence="1" type="primary">tusA</name>
    <name type="ordered locus">VSAL_I2968</name>
</gene>
<keyword id="KW-0963">Cytoplasm</keyword>